<name>MURQ_STAAN</name>
<protein>
    <recommendedName>
        <fullName evidence="1">N-acetylmuramic acid 6-phosphate etherase</fullName>
        <shortName evidence="1">MurNAc-6-P etherase</shortName>
        <ecNumber evidence="1">4.2.1.126</ecNumber>
    </recommendedName>
    <alternativeName>
        <fullName evidence="1">N-acetylmuramic acid 6-phosphate hydrolase</fullName>
    </alternativeName>
    <alternativeName>
        <fullName evidence="1">N-acetylmuramic acid 6-phosphate lyase</fullName>
    </alternativeName>
</protein>
<dbReference type="EC" id="4.2.1.126" evidence="1"/>
<dbReference type="EMBL" id="BA000018">
    <property type="protein sequence ID" value="BAB41406.1"/>
    <property type="molecule type" value="Genomic_DNA"/>
</dbReference>
<dbReference type="PIR" id="C89781">
    <property type="entry name" value="C89781"/>
</dbReference>
<dbReference type="SMR" id="Q7A805"/>
<dbReference type="EnsemblBacteria" id="BAB41406">
    <property type="protein sequence ID" value="BAB41406"/>
    <property type="gene ID" value="BAB41406"/>
</dbReference>
<dbReference type="KEGG" id="sau:SA0185"/>
<dbReference type="HOGENOM" id="CLU_049049_1_1_9"/>
<dbReference type="UniPathway" id="UPA00342"/>
<dbReference type="GO" id="GO:0097367">
    <property type="term" value="F:carbohydrate derivative binding"/>
    <property type="evidence" value="ECO:0007669"/>
    <property type="project" value="InterPro"/>
</dbReference>
<dbReference type="GO" id="GO:0016835">
    <property type="term" value="F:carbon-oxygen lyase activity"/>
    <property type="evidence" value="ECO:0007669"/>
    <property type="project" value="UniProtKB-UniRule"/>
</dbReference>
<dbReference type="GO" id="GO:0016803">
    <property type="term" value="F:ether hydrolase activity"/>
    <property type="evidence" value="ECO:0007669"/>
    <property type="project" value="TreeGrafter"/>
</dbReference>
<dbReference type="GO" id="GO:0046348">
    <property type="term" value="P:amino sugar catabolic process"/>
    <property type="evidence" value="ECO:0007669"/>
    <property type="project" value="InterPro"/>
</dbReference>
<dbReference type="GO" id="GO:0097173">
    <property type="term" value="P:N-acetylmuramic acid catabolic process"/>
    <property type="evidence" value="ECO:0007669"/>
    <property type="project" value="UniProtKB-UniPathway"/>
</dbReference>
<dbReference type="GO" id="GO:0009254">
    <property type="term" value="P:peptidoglycan turnover"/>
    <property type="evidence" value="ECO:0007669"/>
    <property type="project" value="TreeGrafter"/>
</dbReference>
<dbReference type="CDD" id="cd05007">
    <property type="entry name" value="SIS_Etherase"/>
    <property type="match status" value="1"/>
</dbReference>
<dbReference type="FunFam" id="1.10.8.1080:FF:000001">
    <property type="entry name" value="N-acetylmuramic acid 6-phosphate etherase"/>
    <property type="match status" value="1"/>
</dbReference>
<dbReference type="FunFam" id="3.40.50.10490:FF:000014">
    <property type="entry name" value="N-acetylmuramic acid 6-phosphate etherase"/>
    <property type="match status" value="1"/>
</dbReference>
<dbReference type="Gene3D" id="1.10.8.1080">
    <property type="match status" value="1"/>
</dbReference>
<dbReference type="Gene3D" id="3.40.50.10490">
    <property type="entry name" value="Glucose-6-phosphate isomerase like protein, domain 1"/>
    <property type="match status" value="1"/>
</dbReference>
<dbReference type="HAMAP" id="MF_00068">
    <property type="entry name" value="MurQ"/>
    <property type="match status" value="1"/>
</dbReference>
<dbReference type="InterPro" id="IPR005488">
    <property type="entry name" value="Etherase_MurQ"/>
</dbReference>
<dbReference type="InterPro" id="IPR005486">
    <property type="entry name" value="Glucokinase_regulatory_CS"/>
</dbReference>
<dbReference type="InterPro" id="IPR040190">
    <property type="entry name" value="MURQ/GCKR"/>
</dbReference>
<dbReference type="InterPro" id="IPR000408">
    <property type="entry name" value="Reg_chr_condens"/>
</dbReference>
<dbReference type="InterPro" id="IPR001347">
    <property type="entry name" value="SIS_dom"/>
</dbReference>
<dbReference type="InterPro" id="IPR046348">
    <property type="entry name" value="SIS_dom_sf"/>
</dbReference>
<dbReference type="NCBIfam" id="TIGR00274">
    <property type="entry name" value="N-acetylmuramic acid 6-phosphate etherase"/>
    <property type="match status" value="1"/>
</dbReference>
<dbReference type="NCBIfam" id="NF003915">
    <property type="entry name" value="PRK05441.1"/>
    <property type="match status" value="1"/>
</dbReference>
<dbReference type="NCBIfam" id="NF009222">
    <property type="entry name" value="PRK12570.1"/>
    <property type="match status" value="1"/>
</dbReference>
<dbReference type="PANTHER" id="PTHR10088">
    <property type="entry name" value="GLUCOKINASE REGULATORY PROTEIN"/>
    <property type="match status" value="1"/>
</dbReference>
<dbReference type="PANTHER" id="PTHR10088:SF4">
    <property type="entry name" value="GLUCOKINASE REGULATORY PROTEIN"/>
    <property type="match status" value="1"/>
</dbReference>
<dbReference type="Pfam" id="PF22645">
    <property type="entry name" value="GKRP_SIS_N"/>
    <property type="match status" value="1"/>
</dbReference>
<dbReference type="SUPFAM" id="SSF53697">
    <property type="entry name" value="SIS domain"/>
    <property type="match status" value="1"/>
</dbReference>
<dbReference type="PROSITE" id="PS01272">
    <property type="entry name" value="GCKR"/>
    <property type="match status" value="1"/>
</dbReference>
<dbReference type="PROSITE" id="PS51464">
    <property type="entry name" value="SIS"/>
    <property type="match status" value="1"/>
</dbReference>
<comment type="function">
    <text evidence="1">Specifically catalyzes the cleavage of the D-lactyl ether substituent of MurNAc 6-phosphate, producing GlcNAc 6-phosphate and D-lactate.</text>
</comment>
<comment type="catalytic activity">
    <reaction evidence="1">
        <text>N-acetyl-D-muramate 6-phosphate + H2O = N-acetyl-D-glucosamine 6-phosphate + (R)-lactate</text>
        <dbReference type="Rhea" id="RHEA:26410"/>
        <dbReference type="ChEBI" id="CHEBI:15377"/>
        <dbReference type="ChEBI" id="CHEBI:16004"/>
        <dbReference type="ChEBI" id="CHEBI:57513"/>
        <dbReference type="ChEBI" id="CHEBI:58722"/>
        <dbReference type="EC" id="4.2.1.126"/>
    </reaction>
</comment>
<comment type="pathway">
    <text evidence="1">Amino-sugar metabolism; N-acetylmuramate degradation.</text>
</comment>
<comment type="subunit">
    <text evidence="1">Homodimer.</text>
</comment>
<comment type="miscellaneous">
    <text evidence="1">A lyase-type mechanism (elimination/hydration) is suggested for the cleavage of the lactyl ether bond of MurNAc 6-phosphate, with the formation of an alpha,beta-unsaturated aldehyde intermediate with (E)-stereochemistry, followed by the syn addition of water to give product.</text>
</comment>
<comment type="similarity">
    <text evidence="1">Belongs to the GCKR-like family. MurNAc-6-P etherase subfamily.</text>
</comment>
<proteinExistence type="inferred from homology"/>
<gene>
    <name evidence="1" type="primary">murQ</name>
    <name type="ordered locus">SA0185</name>
</gene>
<accession>Q7A805</accession>
<organism>
    <name type="scientific">Staphylococcus aureus (strain N315)</name>
    <dbReference type="NCBI Taxonomy" id="158879"/>
    <lineage>
        <taxon>Bacteria</taxon>
        <taxon>Bacillati</taxon>
        <taxon>Bacillota</taxon>
        <taxon>Bacilli</taxon>
        <taxon>Bacillales</taxon>
        <taxon>Staphylococcaceae</taxon>
        <taxon>Staphylococcus</taxon>
    </lineage>
</organism>
<evidence type="ECO:0000255" key="1">
    <source>
        <dbReference type="HAMAP-Rule" id="MF_00068"/>
    </source>
</evidence>
<keyword id="KW-0119">Carbohydrate metabolism</keyword>
<keyword id="KW-0456">Lyase</keyword>
<feature type="chain" id="PRO_0000249659" description="N-acetylmuramic acid 6-phosphate etherase">
    <location>
        <begin position="1"/>
        <end position="299"/>
    </location>
</feature>
<feature type="domain" description="SIS" evidence="1">
    <location>
        <begin position="54"/>
        <end position="217"/>
    </location>
</feature>
<feature type="active site" description="Proton donor" evidence="1">
    <location>
        <position position="82"/>
    </location>
</feature>
<feature type="active site" evidence="1">
    <location>
        <position position="113"/>
    </location>
</feature>
<sequence length="299" mass="32382">MMENSTTEARNEATMHLDEMTVEEALITMNKEDQQVPLAVRKAIPQLTKVIKKTIAQYKKGGRLIYIGAGTSGRLGVLDAAECVPTFNTDPHEIIGIIAGGQHAMTMAVEGAEDHKKLAEEDLKNIDLTSKDVVIGIAASGKTPYVIGGLTFANTIGATTVSISCNEHAVISEIAQYPVEVKVGPEVLTGSTRLKSGTAQKLILNMISTITMVGVGKVYDNLMIDVKATNQKLIDRSVRIIQEICAITYDEAMALYQVSEHDVKVATVMGMCGISKEEATRRLLNNGDIVKRAIRDRQP</sequence>
<reference key="1">
    <citation type="journal article" date="2001" name="Lancet">
        <title>Whole genome sequencing of meticillin-resistant Staphylococcus aureus.</title>
        <authorList>
            <person name="Kuroda M."/>
            <person name="Ohta T."/>
            <person name="Uchiyama I."/>
            <person name="Baba T."/>
            <person name="Yuzawa H."/>
            <person name="Kobayashi I."/>
            <person name="Cui L."/>
            <person name="Oguchi A."/>
            <person name="Aoki K."/>
            <person name="Nagai Y."/>
            <person name="Lian J.-Q."/>
            <person name="Ito T."/>
            <person name="Kanamori M."/>
            <person name="Matsumaru H."/>
            <person name="Maruyama A."/>
            <person name="Murakami H."/>
            <person name="Hosoyama A."/>
            <person name="Mizutani-Ui Y."/>
            <person name="Takahashi N.K."/>
            <person name="Sawano T."/>
            <person name="Inoue R."/>
            <person name="Kaito C."/>
            <person name="Sekimizu K."/>
            <person name="Hirakawa H."/>
            <person name="Kuhara S."/>
            <person name="Goto S."/>
            <person name="Yabuzaki J."/>
            <person name="Kanehisa M."/>
            <person name="Yamashita A."/>
            <person name="Oshima K."/>
            <person name="Furuya K."/>
            <person name="Yoshino C."/>
            <person name="Shiba T."/>
            <person name="Hattori M."/>
            <person name="Ogasawara N."/>
            <person name="Hayashi H."/>
            <person name="Hiramatsu K."/>
        </authorList>
    </citation>
    <scope>NUCLEOTIDE SEQUENCE [LARGE SCALE GENOMIC DNA]</scope>
    <source>
        <strain>N315</strain>
    </source>
</reference>